<gene>
    <name evidence="1" type="primary">rimM</name>
    <name type="ordered locus">HP_1149</name>
</gene>
<dbReference type="EMBL" id="AE000511">
    <property type="protein sequence ID" value="AAD08193.1"/>
    <property type="molecule type" value="Genomic_DNA"/>
</dbReference>
<dbReference type="PIR" id="E64663">
    <property type="entry name" value="E64663"/>
</dbReference>
<dbReference type="RefSeq" id="NP_207940.1">
    <property type="nucleotide sequence ID" value="NC_000915.1"/>
</dbReference>
<dbReference type="RefSeq" id="WP_000254337.1">
    <property type="nucleotide sequence ID" value="NC_018939.1"/>
</dbReference>
<dbReference type="SMR" id="O25767"/>
<dbReference type="FunCoup" id="O25767">
    <property type="interactions" value="295"/>
</dbReference>
<dbReference type="IntAct" id="O25767">
    <property type="interactions" value="2"/>
</dbReference>
<dbReference type="STRING" id="85962.HP_1149"/>
<dbReference type="PaxDb" id="85962-C694_05935"/>
<dbReference type="EnsemblBacteria" id="AAD08193">
    <property type="protein sequence ID" value="AAD08193"/>
    <property type="gene ID" value="HP_1149"/>
</dbReference>
<dbReference type="KEGG" id="heo:C694_05935"/>
<dbReference type="KEGG" id="hpy:HP_1149"/>
<dbReference type="PATRIC" id="fig|85962.47.peg.1233"/>
<dbReference type="eggNOG" id="COG0806">
    <property type="taxonomic scope" value="Bacteria"/>
</dbReference>
<dbReference type="InParanoid" id="O25767"/>
<dbReference type="OrthoDB" id="9810331at2"/>
<dbReference type="PhylomeDB" id="O25767"/>
<dbReference type="Proteomes" id="UP000000429">
    <property type="component" value="Chromosome"/>
</dbReference>
<dbReference type="GO" id="GO:0005829">
    <property type="term" value="C:cytosol"/>
    <property type="evidence" value="ECO:0000318"/>
    <property type="project" value="GO_Central"/>
</dbReference>
<dbReference type="GO" id="GO:0005840">
    <property type="term" value="C:ribosome"/>
    <property type="evidence" value="ECO:0007669"/>
    <property type="project" value="InterPro"/>
</dbReference>
<dbReference type="GO" id="GO:0043022">
    <property type="term" value="F:ribosome binding"/>
    <property type="evidence" value="ECO:0007669"/>
    <property type="project" value="InterPro"/>
</dbReference>
<dbReference type="GO" id="GO:0030490">
    <property type="term" value="P:maturation of SSU-rRNA"/>
    <property type="evidence" value="ECO:0000318"/>
    <property type="project" value="GO_Central"/>
</dbReference>
<dbReference type="Gene3D" id="2.30.30.240">
    <property type="entry name" value="PRC-barrel domain"/>
    <property type="match status" value="1"/>
</dbReference>
<dbReference type="Gene3D" id="2.40.30.60">
    <property type="entry name" value="RimM"/>
    <property type="match status" value="1"/>
</dbReference>
<dbReference type="HAMAP" id="MF_00014">
    <property type="entry name" value="Ribosome_mat_RimM"/>
    <property type="match status" value="1"/>
</dbReference>
<dbReference type="InterPro" id="IPR027275">
    <property type="entry name" value="PRC-brl_dom"/>
</dbReference>
<dbReference type="InterPro" id="IPR011033">
    <property type="entry name" value="PRC_barrel-like_sf"/>
</dbReference>
<dbReference type="InterPro" id="IPR011961">
    <property type="entry name" value="RimM"/>
</dbReference>
<dbReference type="InterPro" id="IPR002676">
    <property type="entry name" value="RimM_N"/>
</dbReference>
<dbReference type="InterPro" id="IPR036976">
    <property type="entry name" value="RimM_N_sf"/>
</dbReference>
<dbReference type="InterPro" id="IPR009000">
    <property type="entry name" value="Transl_B-barrel_sf"/>
</dbReference>
<dbReference type="NCBIfam" id="TIGR02273">
    <property type="entry name" value="16S_RimM"/>
    <property type="match status" value="1"/>
</dbReference>
<dbReference type="PANTHER" id="PTHR33692">
    <property type="entry name" value="RIBOSOME MATURATION FACTOR RIMM"/>
    <property type="match status" value="1"/>
</dbReference>
<dbReference type="PANTHER" id="PTHR33692:SF1">
    <property type="entry name" value="RIBOSOME MATURATION FACTOR RIMM"/>
    <property type="match status" value="1"/>
</dbReference>
<dbReference type="Pfam" id="PF05239">
    <property type="entry name" value="PRC"/>
    <property type="match status" value="1"/>
</dbReference>
<dbReference type="Pfam" id="PF01782">
    <property type="entry name" value="RimM"/>
    <property type="match status" value="1"/>
</dbReference>
<dbReference type="SUPFAM" id="SSF50346">
    <property type="entry name" value="PRC-barrel domain"/>
    <property type="match status" value="1"/>
</dbReference>
<dbReference type="SUPFAM" id="SSF50447">
    <property type="entry name" value="Translation proteins"/>
    <property type="match status" value="1"/>
</dbReference>
<feature type="chain" id="PRO_0000163300" description="Ribosome maturation factor RimM">
    <location>
        <begin position="1"/>
        <end position="184"/>
    </location>
</feature>
<feature type="domain" description="PRC barrel" evidence="1">
    <location>
        <begin position="101"/>
        <end position="180"/>
    </location>
</feature>
<keyword id="KW-0143">Chaperone</keyword>
<keyword id="KW-0963">Cytoplasm</keyword>
<keyword id="KW-1185">Reference proteome</keyword>
<keyword id="KW-0690">Ribosome biogenesis</keyword>
<keyword id="KW-0698">rRNA processing</keyword>
<sequence length="184" mass="20792">MVSMLLVGRIGKSVGLNGGLRLHLESDFPECLKKGVKVSVAPLNAFSCVSSFKEYIIHSYEHAKNLLFLETIQTPEKAKELTNLGLFMSEAESKKLCVLKEGEFFYCDLVGLSVVEENEILGKVIEIQRISQTDYFLVETTLNLVEKGLAKIFLIPYRDFYIQEILLQDKKITTHNAKTLLENS</sequence>
<protein>
    <recommendedName>
        <fullName evidence="1">Ribosome maturation factor RimM</fullName>
    </recommendedName>
</protein>
<organism>
    <name type="scientific">Helicobacter pylori (strain ATCC 700392 / 26695)</name>
    <name type="common">Campylobacter pylori</name>
    <dbReference type="NCBI Taxonomy" id="85962"/>
    <lineage>
        <taxon>Bacteria</taxon>
        <taxon>Pseudomonadati</taxon>
        <taxon>Campylobacterota</taxon>
        <taxon>Epsilonproteobacteria</taxon>
        <taxon>Campylobacterales</taxon>
        <taxon>Helicobacteraceae</taxon>
        <taxon>Helicobacter</taxon>
    </lineage>
</organism>
<evidence type="ECO:0000255" key="1">
    <source>
        <dbReference type="HAMAP-Rule" id="MF_00014"/>
    </source>
</evidence>
<proteinExistence type="inferred from homology"/>
<accession>O25767</accession>
<comment type="function">
    <text evidence="1">An accessory protein needed during the final step in the assembly of 30S ribosomal subunit, possibly for assembly of the head region. Essential for efficient processing of 16S rRNA. May be needed both before and after RbfA during the maturation of 16S rRNA. It has affinity for free ribosomal 30S subunits but not for 70S ribosomes.</text>
</comment>
<comment type="subunit">
    <text evidence="1">Binds ribosomal protein uS19.</text>
</comment>
<comment type="subcellular location">
    <subcellularLocation>
        <location evidence="1">Cytoplasm</location>
    </subcellularLocation>
</comment>
<comment type="domain">
    <text evidence="1">The PRC barrel domain binds ribosomal protein uS19.</text>
</comment>
<comment type="similarity">
    <text evidence="1">Belongs to the RimM family.</text>
</comment>
<reference key="1">
    <citation type="journal article" date="1997" name="Nature">
        <title>The complete genome sequence of the gastric pathogen Helicobacter pylori.</title>
        <authorList>
            <person name="Tomb J.-F."/>
            <person name="White O."/>
            <person name="Kerlavage A.R."/>
            <person name="Clayton R.A."/>
            <person name="Sutton G.G."/>
            <person name="Fleischmann R.D."/>
            <person name="Ketchum K.A."/>
            <person name="Klenk H.-P."/>
            <person name="Gill S.R."/>
            <person name="Dougherty B.A."/>
            <person name="Nelson K.E."/>
            <person name="Quackenbush J."/>
            <person name="Zhou L."/>
            <person name="Kirkness E.F."/>
            <person name="Peterson S.N."/>
            <person name="Loftus B.J."/>
            <person name="Richardson D.L."/>
            <person name="Dodson R.J."/>
            <person name="Khalak H.G."/>
            <person name="Glodek A."/>
            <person name="McKenney K."/>
            <person name="FitzGerald L.M."/>
            <person name="Lee N."/>
            <person name="Adams M.D."/>
            <person name="Hickey E.K."/>
            <person name="Berg D.E."/>
            <person name="Gocayne J.D."/>
            <person name="Utterback T.R."/>
            <person name="Peterson J.D."/>
            <person name="Kelley J.M."/>
            <person name="Cotton M.D."/>
            <person name="Weidman J.F."/>
            <person name="Fujii C."/>
            <person name="Bowman C."/>
            <person name="Watthey L."/>
            <person name="Wallin E."/>
            <person name="Hayes W.S."/>
            <person name="Borodovsky M."/>
            <person name="Karp P.D."/>
            <person name="Smith H.O."/>
            <person name="Fraser C.M."/>
            <person name="Venter J.C."/>
        </authorList>
    </citation>
    <scope>NUCLEOTIDE SEQUENCE [LARGE SCALE GENOMIC DNA]</scope>
    <source>
        <strain>ATCC 700392 / 26695</strain>
    </source>
</reference>
<name>RIMM_HELPY</name>